<evidence type="ECO:0000250" key="1"/>
<evidence type="ECO:0000256" key="2">
    <source>
        <dbReference type="SAM" id="MobiDB-lite"/>
    </source>
</evidence>
<evidence type="ECO:0000269" key="3">
    <source>
    </source>
</evidence>
<evidence type="ECO:0000269" key="4">
    <source>
    </source>
</evidence>
<evidence type="ECO:0000269" key="5">
    <source>
    </source>
</evidence>
<evidence type="ECO:0000269" key="6">
    <source>
    </source>
</evidence>
<evidence type="ECO:0000269" key="7">
    <source>
    </source>
</evidence>
<evidence type="ECO:0000269" key="8">
    <source>
    </source>
</evidence>
<evidence type="ECO:0000269" key="9">
    <source>
    </source>
</evidence>
<evidence type="ECO:0000269" key="10">
    <source>
    </source>
</evidence>
<evidence type="ECO:0000305" key="11"/>
<evidence type="ECO:0000305" key="12">
    <source>
    </source>
</evidence>
<organism>
    <name type="scientific">Xenopus laevis</name>
    <name type="common">African clawed frog</name>
    <dbReference type="NCBI Taxonomy" id="8355"/>
    <lineage>
        <taxon>Eukaryota</taxon>
        <taxon>Metazoa</taxon>
        <taxon>Chordata</taxon>
        <taxon>Craniata</taxon>
        <taxon>Vertebrata</taxon>
        <taxon>Euteleostomi</taxon>
        <taxon>Amphibia</taxon>
        <taxon>Batrachia</taxon>
        <taxon>Anura</taxon>
        <taxon>Pipoidea</taxon>
        <taxon>Pipidae</taxon>
        <taxon>Xenopodinae</taxon>
        <taxon>Xenopus</taxon>
        <taxon>Xenopus</taxon>
    </lineage>
</organism>
<protein>
    <recommendedName>
        <fullName>Transducin-like enhancer protein 4</fullName>
    </recommendedName>
    <alternativeName>
        <fullName>Enhancer of split groucho-like protein 2</fullName>
        <shortName>ESG2</shortName>
        <shortName>xESG2</shortName>
    </alternativeName>
    <alternativeName>
        <fullName>Grg-4</fullName>
        <shortName>XGrg-4</shortName>
    </alternativeName>
    <alternativeName>
        <fullName>Groucho-related protein 4</fullName>
    </alternativeName>
</protein>
<proteinExistence type="evidence at protein level"/>
<sequence>MIRDLSKMYPQTRHPAPPHQPAQPFKFTISESCDRIKEEFQFLQAQYHSLKLECEKLASEKTEMQRHYVMYYEMSYGLNIEMHKQAEIVKRLNAICAQVIPFLSQEHQQQVVQAVERAKQVTMAELNAIIGQQLQAQHLSHAHGLPVPLTPHPSGLQPPAIPSIGSSAGLLALSSALGGQSHLPIKDEKKHHDSDHQRDRDSIKSSSVSPSASFRAAEKHRNSTDYSSESKKQKTEEKDIAARYDSDGEKSDDNLVVDVSNEDPSSPRGSPAHSPRENGLDKPRLLKKDAPISPASIASSSSTPSSKSKEHSHNEKSTTPVSKSNTPTPRTDAPTPGSNSSGLRPVPGKPPGVDPLTGLRTPMAVPCPYPTPFGIVPHAGMNGDLTSPGPAYASLHSISPQMSAAAAAAAAAAAYGRSPVVGFDPHHHMRVPGIPPNLTGIPGGKPAYSFHVSADGQMQPVPFPPDALIGPGIPRHARQINTLNHGEVVCAVTISNPTRHVYTGGKGCVKVWDISHPGNKSPVSQLDCLNRDNYIRSCRLLPDGRTLIVGGEASTLSIWDLAAPTPRIKAELTSSAPACYALAISPDSKVCFSCCSDGNIAVWDLHNQTLVRQFQGHTDGASCIDISNDGTKLWTGGLDNTVRSWDLREGRQLQQHDFTSQIFSLGYCPTGEWLAVGMENSNVEVLHVTKPDKYQLHLHESCVLSLKFAHCGKWFVSTGKDNLLNAWRTPYGASIFQSKESSSVLSCDISVDDKYIVTGSGDKKATVYEVIY</sequence>
<reference key="1">
    <citation type="journal article" date="1998" name="Nature">
        <title>The Xenopus Wnt effector XTcf-3 interacts with Groucho-related transcriptional repressors.</title>
        <authorList>
            <person name="Roose J."/>
            <person name="Molenaar M."/>
            <person name="Peterson J."/>
            <person name="Hurenkamp J."/>
            <person name="Brantjes H."/>
            <person name="Moerer P."/>
            <person name="van de Wetering M."/>
            <person name="Destree O."/>
            <person name="Clevers H."/>
        </authorList>
    </citation>
    <scope>NUCLEOTIDE SEQUENCE [MRNA]</scope>
    <scope>FUNCTION</scope>
    <scope>INTERACTION WITH TCF7L1 AND TCF7</scope>
    <scope>DEVELOPMENTAL STAGE</scope>
    <source>
        <tissue>Brain</tissue>
    </source>
</reference>
<reference key="2">
    <citation type="submission" date="2004-08" db="EMBL/GenBank/DDBJ databases">
        <authorList>
            <consortium name="NIH - Xenopus Gene Collection (XGC) project"/>
        </authorList>
    </citation>
    <scope>NUCLEOTIDE SEQUENCE [LARGE SCALE MRNA]</scope>
    <source>
        <tissue>Kidney</tissue>
    </source>
</reference>
<reference key="3">
    <citation type="journal article" date="1997" name="Gene">
        <title>Cloning and developmental expression of Xenopus cDNAs encoding the Enhancer of split groucho and related proteins.</title>
        <authorList>
            <person name="Choudhury B.K."/>
            <person name="Kim J."/>
            <person name="Kung H.-F."/>
            <person name="Li S.S.-L."/>
        </authorList>
    </citation>
    <scope>NUCLEOTIDE SEQUENCE [MRNA] OF 575-772</scope>
    <scope>TISSUE SPECIFICITY</scope>
    <scope>DEVELOPMENTAL STAGE</scope>
    <source>
        <tissue>Liver</tissue>
    </source>
</reference>
<reference key="4">
    <citation type="journal article" date="2000" name="Mech. Dev.">
        <title>Differential expression of the Groucho-related genes 4 and 5 during early development of Xenopus laevis.</title>
        <authorList>
            <person name="Molenaar M."/>
            <person name="Brian E."/>
            <person name="Roose J."/>
            <person name="Clevers H."/>
            <person name="Destree O."/>
        </authorList>
    </citation>
    <scope>TISSUE SPECIFICITY</scope>
    <scope>DEVELOPMENTAL STAGE</scope>
</reference>
<reference key="5">
    <citation type="journal article" date="2006" name="Int. J. Dev. Biol.">
        <title>Bowline, a novel protein localized to the presomitic mesoderm, interacts with Groucho/TLE in Xenopus.</title>
        <authorList>
            <person name="Kondow A."/>
            <person name="Hitachi K."/>
            <person name="Ikegame T."/>
            <person name="Asashima M."/>
        </authorList>
    </citation>
    <scope>INTERACTION WITH RIPPLY2.2</scope>
</reference>
<reference key="6">
    <citation type="journal article" date="2007" name="Biochem. Biophys. Res. Commun.">
        <title>Bowline mediates association of the transcriptional corepressor XGrg-4 with Tbx6 during somitogenesis in Xenopus.</title>
        <authorList>
            <person name="Kondow A."/>
            <person name="Hitachi K."/>
            <person name="Okabayashi K."/>
            <person name="Hayashi N."/>
            <person name="Asashima M."/>
        </authorList>
    </citation>
    <scope>IDENTIFICATION IN A COMPLEX WITH RIPPLY2.2 AND TBX6</scope>
</reference>
<reference key="7">
    <citation type="journal article" date="2007" name="J. Biol. Chem.">
        <title>FoxD3 and Grg4 physically interact to repress transcription and induce mesoderm in Xenopus.</title>
        <authorList>
            <person name="Yaklichkin S."/>
            <person name="Steiner A.B."/>
            <person name="Lu Q."/>
            <person name="Kessler D.S."/>
        </authorList>
    </citation>
    <scope>INTERACTION WITH FOXD3</scope>
</reference>
<reference key="8">
    <citation type="journal article" date="2009" name="Int. J. Dev. Biol.">
        <title>The Xenopus Bowline/Ripply family proteins negatively regulate the transcriptional activity of T-box transcription factors.</title>
        <authorList>
            <person name="Hitachi K."/>
            <person name="Danno H."/>
            <person name="Tazumi S."/>
            <person name="Aihara Y."/>
            <person name="Uchiyama H."/>
            <person name="Okabayashi K."/>
            <person name="Kondow A."/>
            <person name="Asashima M."/>
        </authorList>
    </citation>
    <scope>INTERACTION WITH DSCR6</scope>
</reference>
<reference key="9">
    <citation type="journal article" date="2011" name="BMB Rep.">
        <title>EphrinB1 interacts with the transcriptional co-repressor Groucho/xTLE4.</title>
        <authorList>
            <person name="Kamata T."/>
            <person name="Bong Y.S."/>
            <person name="Mood K."/>
            <person name="Park M.J."/>
            <person name="Nishanian T.G."/>
            <person name="Lee H.S."/>
        </authorList>
    </citation>
    <scope>INTERACTION WITH EFNB1</scope>
    <scope>DEVELOPMENTAL STAGE</scope>
</reference>
<name>TLE4_XENLA</name>
<dbReference type="EMBL" id="AJ224945">
    <property type="protein sequence ID" value="CAA12236.1"/>
    <property type="status" value="ALT_INIT"/>
    <property type="molecule type" value="mRNA"/>
</dbReference>
<dbReference type="EMBL" id="BC079799">
    <property type="protein sequence ID" value="AAH79799.1"/>
    <property type="molecule type" value="mRNA"/>
</dbReference>
<dbReference type="EMBL" id="U63516">
    <property type="protein sequence ID" value="AAC60273.1"/>
    <property type="molecule type" value="mRNA"/>
</dbReference>
<dbReference type="RefSeq" id="NP_001084260.1">
    <property type="nucleotide sequence ID" value="NM_001090791.1"/>
</dbReference>
<dbReference type="SMR" id="O42478"/>
<dbReference type="IntAct" id="O42478">
    <property type="interactions" value="1"/>
</dbReference>
<dbReference type="DNASU" id="399397"/>
<dbReference type="AGR" id="Xenbase:XB-GENE-481770"/>
<dbReference type="Xenbase" id="XB-GENE-481770">
    <property type="gene designation" value="tle4.S"/>
</dbReference>
<dbReference type="OrthoDB" id="2624652at2759"/>
<dbReference type="Proteomes" id="UP000186698">
    <property type="component" value="Unplaced"/>
</dbReference>
<dbReference type="Bgee" id="399397">
    <property type="expression patterns" value="Expressed in blastula and 19 other cell types or tissues"/>
</dbReference>
<dbReference type="GO" id="GO:0005654">
    <property type="term" value="C:nucleoplasm"/>
    <property type="evidence" value="ECO:0000304"/>
    <property type="project" value="Reactome"/>
</dbReference>
<dbReference type="GO" id="GO:0005634">
    <property type="term" value="C:nucleus"/>
    <property type="evidence" value="ECO:0000318"/>
    <property type="project" value="GO_Central"/>
</dbReference>
<dbReference type="GO" id="GO:0005667">
    <property type="term" value="C:transcription regulator complex"/>
    <property type="evidence" value="ECO:0000318"/>
    <property type="project" value="GO_Central"/>
</dbReference>
<dbReference type="GO" id="GO:0017053">
    <property type="term" value="C:transcription repressor complex"/>
    <property type="evidence" value="ECO:0000353"/>
    <property type="project" value="UniProtKB"/>
</dbReference>
<dbReference type="GO" id="GO:0003714">
    <property type="term" value="F:transcription corepressor activity"/>
    <property type="evidence" value="ECO:0000316"/>
    <property type="project" value="UniProtKB"/>
</dbReference>
<dbReference type="GO" id="GO:0001707">
    <property type="term" value="P:mesoderm formation"/>
    <property type="evidence" value="ECO:0000315"/>
    <property type="project" value="UniProtKB"/>
</dbReference>
<dbReference type="GO" id="GO:0090090">
    <property type="term" value="P:negative regulation of canonical Wnt signaling pathway"/>
    <property type="evidence" value="ECO:0000318"/>
    <property type="project" value="GO_Central"/>
</dbReference>
<dbReference type="GO" id="GO:0000122">
    <property type="term" value="P:negative regulation of transcription by RNA polymerase II"/>
    <property type="evidence" value="ECO:0000314"/>
    <property type="project" value="UniProtKB"/>
</dbReference>
<dbReference type="CDD" id="cd00200">
    <property type="entry name" value="WD40"/>
    <property type="match status" value="1"/>
</dbReference>
<dbReference type="FunFam" id="2.130.10.10:FF:000001">
    <property type="entry name" value="transducin-like enhancer protein 3 isoform X1"/>
    <property type="match status" value="1"/>
</dbReference>
<dbReference type="Gene3D" id="2.130.10.10">
    <property type="entry name" value="YVTN repeat-like/Quinoprotein amine dehydrogenase"/>
    <property type="match status" value="1"/>
</dbReference>
<dbReference type="InterPro" id="IPR005617">
    <property type="entry name" value="Groucho/TLE_N"/>
</dbReference>
<dbReference type="InterPro" id="IPR009146">
    <property type="entry name" value="Groucho_enhance"/>
</dbReference>
<dbReference type="InterPro" id="IPR015943">
    <property type="entry name" value="WD40/YVTN_repeat-like_dom_sf"/>
</dbReference>
<dbReference type="InterPro" id="IPR019775">
    <property type="entry name" value="WD40_repeat_CS"/>
</dbReference>
<dbReference type="InterPro" id="IPR036322">
    <property type="entry name" value="WD40_repeat_dom_sf"/>
</dbReference>
<dbReference type="InterPro" id="IPR001680">
    <property type="entry name" value="WD40_rpt"/>
</dbReference>
<dbReference type="PANTHER" id="PTHR10814">
    <property type="entry name" value="TRANSDUCIN-LIKE ENHANCER PROTEIN"/>
    <property type="match status" value="1"/>
</dbReference>
<dbReference type="PANTHER" id="PTHR10814:SF31">
    <property type="entry name" value="TRANSDUCIN-LIKE ENHANCER PROTEIN 4"/>
    <property type="match status" value="1"/>
</dbReference>
<dbReference type="Pfam" id="PF03920">
    <property type="entry name" value="TLE_N"/>
    <property type="match status" value="1"/>
</dbReference>
<dbReference type="Pfam" id="PF00400">
    <property type="entry name" value="WD40"/>
    <property type="match status" value="6"/>
</dbReference>
<dbReference type="PRINTS" id="PR01850">
    <property type="entry name" value="GROUCHOFAMLY"/>
</dbReference>
<dbReference type="SMART" id="SM00320">
    <property type="entry name" value="WD40"/>
    <property type="match status" value="7"/>
</dbReference>
<dbReference type="SUPFAM" id="SSF50978">
    <property type="entry name" value="WD40 repeat-like"/>
    <property type="match status" value="1"/>
</dbReference>
<dbReference type="PROSITE" id="PS00678">
    <property type="entry name" value="WD_REPEATS_1"/>
    <property type="match status" value="2"/>
</dbReference>
<dbReference type="PROSITE" id="PS50082">
    <property type="entry name" value="WD_REPEATS_2"/>
    <property type="match status" value="3"/>
</dbReference>
<dbReference type="PROSITE" id="PS50294">
    <property type="entry name" value="WD_REPEATS_REGION"/>
    <property type="match status" value="2"/>
</dbReference>
<accession>O42478</accession>
<accession>Q6AX22</accession>
<accession>Q9PSX1</accession>
<gene>
    <name type="primary">tle4</name>
    <name type="synonym">esg2</name>
</gene>
<feature type="chain" id="PRO_0000051291" description="Transducin-like enhancer protein 4">
    <location>
        <begin position="1"/>
        <end position="772"/>
    </location>
</feature>
<feature type="repeat" description="WD 1">
    <location>
        <begin position="484"/>
        <end position="522"/>
    </location>
</feature>
<feature type="repeat" description="WD 2">
    <location>
        <begin position="530"/>
        <end position="569"/>
    </location>
</feature>
<feature type="repeat" description="WD 3">
    <location>
        <begin position="574"/>
        <end position="613"/>
    </location>
</feature>
<feature type="repeat" description="WD 4">
    <location>
        <begin position="616"/>
        <end position="655"/>
    </location>
</feature>
<feature type="repeat" description="WD 5">
    <location>
        <begin position="657"/>
        <end position="696"/>
    </location>
</feature>
<feature type="repeat" description="WD 6">
    <location>
        <begin position="698"/>
        <end position="737"/>
    </location>
</feature>
<feature type="repeat" description="WD 7">
    <location>
        <begin position="739"/>
        <end position="772"/>
    </location>
</feature>
<feature type="region of interest" description="Q domain" evidence="12">
    <location>
        <begin position="1"/>
        <end position="137"/>
    </location>
</feature>
<feature type="region of interest" description="Disordered" evidence="2">
    <location>
        <begin position="1"/>
        <end position="24"/>
    </location>
</feature>
<feature type="region of interest" description="GP domain" evidence="12">
    <location>
        <begin position="138"/>
        <end position="205"/>
    </location>
</feature>
<feature type="region of interest" description="Disordered" evidence="2">
    <location>
        <begin position="183"/>
        <end position="359"/>
    </location>
</feature>
<feature type="region of interest" description="CcN domain" evidence="12">
    <location>
        <begin position="206"/>
        <end position="275"/>
    </location>
</feature>
<feature type="region of interest" description="SP domain" evidence="12">
    <location>
        <begin position="276"/>
        <end position="452"/>
    </location>
</feature>
<feature type="compositionally biased region" description="Basic and acidic residues" evidence="2">
    <location>
        <begin position="184"/>
        <end position="203"/>
    </location>
</feature>
<feature type="compositionally biased region" description="Low complexity" evidence="2">
    <location>
        <begin position="204"/>
        <end position="213"/>
    </location>
</feature>
<feature type="compositionally biased region" description="Basic and acidic residues" evidence="2">
    <location>
        <begin position="216"/>
        <end position="253"/>
    </location>
</feature>
<feature type="compositionally biased region" description="Basic and acidic residues" evidence="2">
    <location>
        <begin position="274"/>
        <end position="290"/>
    </location>
</feature>
<feature type="compositionally biased region" description="Low complexity" evidence="2">
    <location>
        <begin position="291"/>
        <end position="306"/>
    </location>
</feature>
<feature type="compositionally biased region" description="Basic and acidic residues" evidence="2">
    <location>
        <begin position="307"/>
        <end position="316"/>
    </location>
</feature>
<feature type="compositionally biased region" description="Polar residues" evidence="2">
    <location>
        <begin position="318"/>
        <end position="329"/>
    </location>
</feature>
<feature type="sequence conflict" description="In Ref. 1; CAA12236." evidence="11" ref="1">
    <original>P</original>
    <variation>A</variation>
    <location>
        <position position="17"/>
    </location>
</feature>
<feature type="sequence conflict" description="In Ref. 1; CAA12236." evidence="11" ref="1">
    <original>N</original>
    <variation>D</variation>
    <location>
        <position position="79"/>
    </location>
</feature>
<feature type="sequence conflict" description="In Ref. 1; CAA12236." evidence="11" ref="1">
    <original>G</original>
    <variation>GQ</variation>
    <location>
        <position position="131"/>
    </location>
</feature>
<feature type="sequence conflict" description="In Ref. 1; CAA12236." evidence="11" ref="1">
    <original>D</original>
    <variation>S</variation>
    <location>
        <position position="245"/>
    </location>
</feature>
<feature type="sequence conflict" description="In Ref. 1; CAA12236." evidence="11" ref="1">
    <original>V</original>
    <variation>R</variation>
    <location>
        <position position="257"/>
    </location>
</feature>
<feature type="sequence conflict" description="In Ref. 1; CAA12236." evidence="11" ref="1">
    <original>C</original>
    <variation>V</variation>
    <location>
        <position position="367"/>
    </location>
</feature>
<feature type="sequence conflict" description="In Ref. 3; AAC60273." evidence="11" ref="3">
    <original>N</original>
    <variation>S</variation>
    <location>
        <position position="680"/>
    </location>
</feature>
<comment type="function">
    <text evidence="10">Transcriptional corepressor. Functions with ripply2.2/bowline to down regulate transcription of tbx6-dependent gene expression. Represses transcription of siamois and nodal3.</text>
</comment>
<comment type="subunit">
    <text evidence="4 5 6 7 8 10">Interacts with tcf7, tcf7l1, ripply2.2/bowline, dscr6/ripply3 and foxd3. Associates with tbx6 in the presence of ripply2.2/bowline. Interacts with EFNB1 through the SP domain.</text>
</comment>
<comment type="interaction">
    <interactant intactId="EBI-2946644">
        <id>O42478</id>
    </interactant>
    <interactant intactId="EBI-2946647">
        <id>Q25QX6</id>
        <label>ripply2.2</label>
    </interactant>
    <organismsDiffer>false</organismsDiffer>
    <experiments>2</experiments>
</comment>
<comment type="subcellular location">
    <subcellularLocation>
        <location evidence="11">Nucleus</location>
    </subcellularLocation>
</comment>
<comment type="tissue specificity">
    <text evidence="3 9">Expressed at high levels in the spleen and ovary.</text>
</comment>
<comment type="developmental stage">
    <text evidence="3 8 10">Expressed maternally. At end of gastrulation, expressed in the prospective neural plate region. In neurula stages, shows highest expression in the sensorial layer of the neurectoderm, decreasing from anterior to posterior. Shows localized expression within the anterior neural plate, including the floor of the neural groove. Expressed in the cement gland anlage at stage 14. At stage 16, expressed in the neural groove, rhombomeres, forebrain and branchial arches. At stage 22, abundant in the eye vesicles, ear placodes, prospective branchial arches, pronephric anlage, prospective pronephric duct, presomitic mesoderm and the somites. In the developing brain, expression is dynamic, being most abundant in the mesencephalon and posterior rhombencephalon. At stage 30, expressed in cephalic ganglia V and VII and in stage 35, also IX and X. Also expressed in the future endocardium and pericardium. At stage 32, expressed in the neural groove, rhombomeres, forebrain and branchial arches. At stage 35, expressed in the future choroid plexus of the telencephalon and in the ependymal layer. Throughout the neural tube, expressed in a dorsal to ventral gradient. In the developing eye, expressed in the prospective ganglion cell layer, the ciliary marginal zone and the lens.</text>
</comment>
<comment type="domain">
    <text evidence="8">WD repeat Groucho/TLE family members are characterized by 5 regions, a glutamine-rich Q domain, a glycine/proline-rich GP domain, a central CcN domain, containing a nuclear localization signal, and a serine/proline-rich SP domain. The most highly conserved are the N-terminal Q domain and the C-terminal WD-repeat domain. The SP domain is involved in EFNB1-binding.</text>
</comment>
<comment type="PTM">
    <text evidence="1">Ubiquitinated by XIAP/BIRC4.</text>
</comment>
<comment type="similarity">
    <text evidence="11">Belongs to the WD repeat Groucho/TLE family.</text>
</comment>
<comment type="caution">
    <text evidence="11">It is uncertain whether Met-1 or Met-8 is the initiator.</text>
</comment>
<comment type="sequence caution" evidence="11">
    <conflict type="erroneous initiation">
        <sequence resource="EMBL-CDS" id="CAA12236"/>
    </conflict>
</comment>
<keyword id="KW-0539">Nucleus</keyword>
<keyword id="KW-1185">Reference proteome</keyword>
<keyword id="KW-0677">Repeat</keyword>
<keyword id="KW-0678">Repressor</keyword>
<keyword id="KW-0804">Transcription</keyword>
<keyword id="KW-0805">Transcription regulation</keyword>
<keyword id="KW-0832">Ubl conjugation</keyword>
<keyword id="KW-0853">WD repeat</keyword>